<feature type="signal peptide" evidence="1">
    <location>
        <begin position="1"/>
        <end position="19"/>
    </location>
</feature>
<feature type="chain" id="PRO_0000035729" description="Lactotransferrin">
    <location>
        <begin position="20"/>
        <end position="708"/>
    </location>
</feature>
<feature type="domain" description="Transferrin-like 1" evidence="4">
    <location>
        <begin position="25"/>
        <end position="352"/>
    </location>
</feature>
<feature type="domain" description="Transferrin-like 2" evidence="4">
    <location>
        <begin position="364"/>
        <end position="693"/>
    </location>
</feature>
<feature type="region of interest" description="Interaction with E.coli ompC">
    <location>
        <begin position="44"/>
        <end position="51"/>
    </location>
</feature>
<feature type="active site" evidence="4">
    <location>
        <position position="92"/>
    </location>
</feature>
<feature type="active site" description="Nucleophile" evidence="4">
    <location>
        <position position="278"/>
    </location>
</feature>
<feature type="binding site" evidence="4">
    <location>
        <position position="79"/>
    </location>
    <ligand>
        <name>Fe(3+)</name>
        <dbReference type="ChEBI" id="CHEBI:29034"/>
        <label>1</label>
    </ligand>
</feature>
<feature type="binding site" evidence="4 6">
    <location>
        <position position="111"/>
    </location>
    <ligand>
        <name>Fe(3+)</name>
        <dbReference type="ChEBI" id="CHEBI:29034"/>
        <label>1</label>
    </ligand>
</feature>
<feature type="binding site" evidence="4">
    <location>
        <position position="136"/>
    </location>
    <ligand>
        <name>hydrogencarbonate</name>
        <dbReference type="ChEBI" id="CHEBI:17544"/>
        <label>1</label>
    </ligand>
</feature>
<feature type="binding site" evidence="4 6">
    <location>
        <position position="140"/>
    </location>
    <ligand>
        <name>hydrogencarbonate</name>
        <dbReference type="ChEBI" id="CHEBI:17544"/>
        <label>1</label>
    </ligand>
</feature>
<feature type="binding site" evidence="4">
    <location>
        <position position="142"/>
    </location>
    <ligand>
        <name>hydrogencarbonate</name>
        <dbReference type="ChEBI" id="CHEBI:17544"/>
        <label>1</label>
    </ligand>
</feature>
<feature type="binding site" evidence="4">
    <location>
        <position position="143"/>
    </location>
    <ligand>
        <name>hydrogencarbonate</name>
        <dbReference type="ChEBI" id="CHEBI:17544"/>
        <label>1</label>
    </ligand>
</feature>
<feature type="binding site" evidence="4 6">
    <location>
        <position position="211"/>
    </location>
    <ligand>
        <name>Fe(3+)</name>
        <dbReference type="ChEBI" id="CHEBI:29034"/>
        <label>1</label>
    </ligand>
</feature>
<feature type="binding site" evidence="4">
    <location>
        <position position="272"/>
    </location>
    <ligand>
        <name>Fe(3+)</name>
        <dbReference type="ChEBI" id="CHEBI:29034"/>
        <label>1</label>
    </ligand>
</feature>
<feature type="binding site" evidence="4">
    <location>
        <position position="414"/>
    </location>
    <ligand>
        <name>Fe(3+)</name>
        <dbReference type="ChEBI" id="CHEBI:29034"/>
        <label>2</label>
    </ligand>
</feature>
<feature type="binding site" evidence="4 6">
    <location>
        <position position="452"/>
    </location>
    <ligand>
        <name>Fe(3+)</name>
        <dbReference type="ChEBI" id="CHEBI:29034"/>
        <label>2</label>
    </ligand>
</feature>
<feature type="binding site" evidence="4">
    <location>
        <position position="478"/>
    </location>
    <ligand>
        <name>hydrogencarbonate</name>
        <dbReference type="ChEBI" id="CHEBI:17544"/>
        <label>2</label>
    </ligand>
</feature>
<feature type="binding site" evidence="4 6">
    <location>
        <position position="482"/>
    </location>
    <ligand>
        <name>hydrogencarbonate</name>
        <dbReference type="ChEBI" id="CHEBI:17544"/>
        <label>2</label>
    </ligand>
</feature>
<feature type="binding site" evidence="4">
    <location>
        <position position="484"/>
    </location>
    <ligand>
        <name>hydrogencarbonate</name>
        <dbReference type="ChEBI" id="CHEBI:17544"/>
        <label>2</label>
    </ligand>
</feature>
<feature type="binding site" evidence="4">
    <location>
        <position position="485"/>
    </location>
    <ligand>
        <name>hydrogencarbonate</name>
        <dbReference type="ChEBI" id="CHEBI:17544"/>
        <label>2</label>
    </ligand>
</feature>
<feature type="binding site" evidence="4 6">
    <location>
        <position position="545"/>
    </location>
    <ligand>
        <name>Fe(3+)</name>
        <dbReference type="ChEBI" id="CHEBI:29034"/>
        <label>2</label>
    </ligand>
</feature>
<feature type="binding site" evidence="4">
    <location>
        <position position="614"/>
    </location>
    <ligand>
        <name>Fe(3+)</name>
        <dbReference type="ChEBI" id="CHEBI:29034"/>
        <label>2</label>
    </ligand>
</feature>
<feature type="glycosylation site" description="N-linked (GlcNAc...) asparagine" evidence="5">
    <location>
        <position position="252"/>
    </location>
</feature>
<feature type="glycosylation site" description="N-linked (GlcNAc...) asparagine" evidence="3">
    <location>
        <position position="385"/>
    </location>
</feature>
<feature type="glycosylation site" description="N-linked (GlcNAc...) asparagine" evidence="5">
    <location>
        <position position="537"/>
    </location>
</feature>
<feature type="glycosylation site" description="N-linked (GlcNAc...) asparagine" evidence="3">
    <location>
        <position position="594"/>
    </location>
</feature>
<feature type="disulfide bond">
    <location>
        <begin position="28"/>
        <end position="64"/>
    </location>
</feature>
<feature type="disulfide bond">
    <location>
        <begin position="38"/>
        <end position="55"/>
    </location>
</feature>
<feature type="disulfide bond">
    <location>
        <begin position="134"/>
        <end position="217"/>
    </location>
</feature>
<feature type="disulfide bond">
    <location>
        <begin position="176"/>
        <end position="192"/>
    </location>
</feature>
<feature type="disulfide bond">
    <location>
        <begin position="179"/>
        <end position="202"/>
    </location>
</feature>
<feature type="disulfide bond">
    <location>
        <begin position="189"/>
        <end position="200"/>
    </location>
</feature>
<feature type="disulfide bond">
    <location>
        <begin position="250"/>
        <end position="264"/>
    </location>
</feature>
<feature type="disulfide bond">
    <location>
        <begin position="367"/>
        <end position="399"/>
    </location>
</feature>
<feature type="disulfide bond">
    <location>
        <begin position="377"/>
        <end position="390"/>
    </location>
</feature>
<feature type="disulfide bond">
    <location>
        <begin position="424"/>
        <end position="703"/>
    </location>
</feature>
<feature type="disulfide bond">
    <location>
        <begin position="444"/>
        <end position="666"/>
    </location>
</feature>
<feature type="disulfide bond">
    <location>
        <begin position="476"/>
        <end position="551"/>
    </location>
</feature>
<feature type="disulfide bond">
    <location>
        <begin position="500"/>
        <end position="694"/>
    </location>
</feature>
<feature type="disulfide bond">
    <location>
        <begin position="510"/>
        <end position="524"/>
    </location>
</feature>
<feature type="disulfide bond">
    <location>
        <begin position="521"/>
        <end position="534"/>
    </location>
</feature>
<feature type="disulfide bond">
    <location>
        <begin position="592"/>
        <end position="606"/>
    </location>
</feature>
<feature type="disulfide bond">
    <location>
        <begin position="644"/>
        <end position="649"/>
    </location>
</feature>
<feature type="sequence conflict" description="In Ref. 2; AAF82241." evidence="7" ref="2">
    <original>F</original>
    <variation>S</variation>
    <location>
        <position position="261"/>
    </location>
</feature>
<feature type="sequence conflict" description="In Ref. 2; AAF82241." evidence="7" ref="2">
    <original>G</original>
    <variation>A</variation>
    <location>
        <position position="304"/>
    </location>
</feature>
<feature type="sequence conflict" description="In Ref. 2; AAF82241." evidence="7" ref="2">
    <original>S</original>
    <variation>P</variation>
    <location>
        <position position="330"/>
    </location>
</feature>
<feature type="sequence conflict" description="In Ref. 2; AAF82241." evidence="7" ref="2">
    <original>LLS</original>
    <variation>PLF</variation>
    <location>
        <begin position="492"/>
        <end position="494"/>
    </location>
</feature>
<feature type="sequence conflict" description="In Ref. 2; AAF82241." evidence="7" ref="2">
    <original>L</original>
    <variation>F</variation>
    <location>
        <position position="506"/>
    </location>
</feature>
<feature type="sequence conflict" description="In Ref. 2; AAF82241." evidence="7" ref="2">
    <original>A</original>
    <variation>P</variation>
    <location>
        <position position="609"/>
    </location>
</feature>
<feature type="sequence conflict" description="In Ref. 2; AAF82241." evidence="7" ref="2">
    <original>R</original>
    <variation>Q</variation>
    <location>
        <position position="642"/>
    </location>
</feature>
<feature type="strand" evidence="8">
    <location>
        <begin position="23"/>
        <end position="31"/>
    </location>
</feature>
<feature type="helix" evidence="8">
    <location>
        <begin position="32"/>
        <end position="46"/>
    </location>
</feature>
<feature type="turn" evidence="8">
    <location>
        <begin position="47"/>
        <end position="49"/>
    </location>
</feature>
<feature type="strand" evidence="8">
    <location>
        <begin position="53"/>
        <end position="57"/>
    </location>
</feature>
<feature type="helix" evidence="8">
    <location>
        <begin position="61"/>
        <end position="69"/>
    </location>
</feature>
<feature type="strand" evidence="8">
    <location>
        <begin position="75"/>
        <end position="78"/>
    </location>
</feature>
<feature type="helix" evidence="8">
    <location>
        <begin position="80"/>
        <end position="87"/>
    </location>
</feature>
<feature type="turn" evidence="8">
    <location>
        <begin position="89"/>
        <end position="91"/>
    </location>
</feature>
<feature type="strand" evidence="8">
    <location>
        <begin position="93"/>
        <end position="99"/>
    </location>
</feature>
<feature type="strand" evidence="8">
    <location>
        <begin position="104"/>
        <end position="106"/>
    </location>
</feature>
<feature type="strand" evidence="8">
    <location>
        <begin position="108"/>
        <end position="120"/>
    </location>
</feature>
<feature type="helix" evidence="8">
    <location>
        <begin position="125"/>
        <end position="127"/>
    </location>
</feature>
<feature type="strand" evidence="8">
    <location>
        <begin position="132"/>
        <end position="136"/>
    </location>
</feature>
<feature type="turn" evidence="8">
    <location>
        <begin position="141"/>
        <end position="144"/>
    </location>
</feature>
<feature type="helix" evidence="8">
    <location>
        <begin position="145"/>
        <end position="150"/>
    </location>
</feature>
<feature type="helix" evidence="8">
    <location>
        <begin position="152"/>
        <end position="154"/>
    </location>
</feature>
<feature type="helix" evidence="8">
    <location>
        <begin position="164"/>
        <end position="171"/>
    </location>
</feature>
<feature type="strand" evidence="8">
    <location>
        <begin position="172"/>
        <end position="176"/>
    </location>
</feature>
<feature type="strand" evidence="9">
    <location>
        <begin position="178"/>
        <end position="180"/>
    </location>
</feature>
<feature type="turn" evidence="8">
    <location>
        <begin position="182"/>
        <end position="184"/>
    </location>
</feature>
<feature type="helix" evidence="8">
    <location>
        <begin position="186"/>
        <end position="189"/>
    </location>
</feature>
<feature type="helix" evidence="8">
    <location>
        <begin position="196"/>
        <end position="198"/>
    </location>
</feature>
<feature type="helix" evidence="8">
    <location>
        <begin position="210"/>
        <end position="219"/>
    </location>
</feature>
<feature type="strand" evidence="8">
    <location>
        <begin position="220"/>
        <end position="222"/>
    </location>
</feature>
<feature type="strand" evidence="8">
    <location>
        <begin position="224"/>
        <end position="229"/>
    </location>
</feature>
<feature type="helix" evidence="8">
    <location>
        <begin position="232"/>
        <end position="236"/>
    </location>
</feature>
<feature type="helix" evidence="8">
    <location>
        <begin position="240"/>
        <end position="243"/>
    </location>
</feature>
<feature type="strand" evidence="8">
    <location>
        <begin position="246"/>
        <end position="250"/>
    </location>
</feature>
<feature type="turn" evidence="8">
    <location>
        <begin position="251"/>
        <end position="253"/>
    </location>
</feature>
<feature type="strand" evidence="8">
    <location>
        <begin position="254"/>
        <end position="256"/>
    </location>
</feature>
<feature type="helix" evidence="8">
    <location>
        <begin position="258"/>
        <end position="260"/>
    </location>
</feature>
<feature type="turn" evidence="8">
    <location>
        <begin position="261"/>
        <end position="263"/>
    </location>
</feature>
<feature type="strand" evidence="8">
    <location>
        <begin position="266"/>
        <end position="270"/>
    </location>
</feature>
<feature type="strand" evidence="8">
    <location>
        <begin position="273"/>
        <end position="278"/>
    </location>
</feature>
<feature type="helix" evidence="8">
    <location>
        <begin position="283"/>
        <end position="297"/>
    </location>
</feature>
<feature type="strand" evidence="8">
    <location>
        <begin position="317"/>
        <end position="319"/>
    </location>
</feature>
<feature type="strand" evidence="8">
    <location>
        <begin position="326"/>
        <end position="328"/>
    </location>
</feature>
<feature type="helix" evidence="8">
    <location>
        <begin position="335"/>
        <end position="339"/>
    </location>
</feature>
<feature type="helix" evidence="8">
    <location>
        <begin position="341"/>
        <end position="348"/>
    </location>
</feature>
<feature type="turn" evidence="8">
    <location>
        <begin position="349"/>
        <end position="351"/>
    </location>
</feature>
<feature type="helix" evidence="8">
    <location>
        <begin position="354"/>
        <end position="362"/>
    </location>
</feature>
<feature type="strand" evidence="8">
    <location>
        <begin position="363"/>
        <end position="370"/>
    </location>
</feature>
<feature type="helix" evidence="8">
    <location>
        <begin position="371"/>
        <end position="384"/>
    </location>
</feature>
<feature type="strand" evidence="8">
    <location>
        <begin position="387"/>
        <end position="395"/>
    </location>
</feature>
<feature type="helix" evidence="8">
    <location>
        <begin position="396"/>
        <end position="404"/>
    </location>
</feature>
<feature type="strand" evidence="8">
    <location>
        <begin position="410"/>
        <end position="413"/>
    </location>
</feature>
<feature type="helix" evidence="8">
    <location>
        <begin position="415"/>
        <end position="422"/>
    </location>
</feature>
<feature type="turn" evidence="8">
    <location>
        <begin position="423"/>
        <end position="425"/>
    </location>
</feature>
<feature type="strand" evidence="8">
    <location>
        <begin position="427"/>
        <end position="434"/>
    </location>
</feature>
<feature type="turn" evidence="8">
    <location>
        <begin position="444"/>
        <end position="446"/>
    </location>
</feature>
<feature type="strand" evidence="8">
    <location>
        <begin position="453"/>
        <end position="461"/>
    </location>
</feature>
<feature type="turn" evidence="8">
    <location>
        <begin position="467"/>
        <end position="472"/>
    </location>
</feature>
<feature type="strand" evidence="8">
    <location>
        <begin position="473"/>
        <end position="478"/>
    </location>
</feature>
<feature type="turn" evidence="8">
    <location>
        <begin position="483"/>
        <end position="493"/>
    </location>
</feature>
<feature type="strand" evidence="8">
    <location>
        <begin position="494"/>
        <end position="497"/>
    </location>
</feature>
<feature type="strand" evidence="8">
    <location>
        <begin position="504"/>
        <end position="510"/>
    </location>
</feature>
<feature type="strand" evidence="8">
    <location>
        <begin position="521"/>
        <end position="523"/>
    </location>
</feature>
<feature type="turn" evidence="8">
    <location>
        <begin position="528"/>
        <end position="530"/>
    </location>
</feature>
<feature type="helix" evidence="8">
    <location>
        <begin position="544"/>
        <end position="553"/>
    </location>
</feature>
<feature type="strand" evidence="8">
    <location>
        <begin position="558"/>
        <end position="563"/>
    </location>
</feature>
<feature type="helix" evidence="8">
    <location>
        <begin position="564"/>
        <end position="567"/>
    </location>
</feature>
<feature type="turn" evidence="9">
    <location>
        <begin position="569"/>
        <end position="574"/>
    </location>
</feature>
<feature type="strand" evidence="8">
    <location>
        <begin position="575"/>
        <end position="578"/>
    </location>
</feature>
<feature type="strand" evidence="9">
    <location>
        <begin position="580"/>
        <end position="582"/>
    </location>
</feature>
<feature type="strand" evidence="9">
    <location>
        <begin position="588"/>
        <end position="591"/>
    </location>
</feature>
<feature type="helix" evidence="8">
    <location>
        <begin position="600"/>
        <end position="605"/>
    </location>
</feature>
<feature type="strand" evidence="8">
    <location>
        <begin position="615"/>
        <end position="618"/>
    </location>
</feature>
<feature type="turn" evidence="8">
    <location>
        <begin position="620"/>
        <end position="622"/>
    </location>
</feature>
<feature type="helix" evidence="8">
    <location>
        <begin position="623"/>
        <end position="637"/>
    </location>
</feature>
<feature type="turn" evidence="8">
    <location>
        <begin position="642"/>
        <end position="646"/>
    </location>
</feature>
<feature type="strand" evidence="8">
    <location>
        <begin position="654"/>
        <end position="656"/>
    </location>
</feature>
<feature type="strand" evidence="8">
    <location>
        <begin position="664"/>
        <end position="669"/>
    </location>
</feature>
<feature type="helix" evidence="8">
    <location>
        <begin position="676"/>
        <end position="680"/>
    </location>
</feature>
<feature type="helix" evidence="8">
    <location>
        <begin position="682"/>
        <end position="692"/>
    </location>
</feature>
<feature type="helix" evidence="8">
    <location>
        <begin position="698"/>
        <end position="705"/>
    </location>
</feature>
<protein>
    <recommendedName>
        <fullName>Lactotransferrin</fullName>
        <shortName>Lactoferrin</shortName>
        <ecNumber>3.4.21.-</ecNumber>
    </recommendedName>
</protein>
<evidence type="ECO:0000250" key="1"/>
<evidence type="ECO:0000250" key="2">
    <source>
        <dbReference type="UniProtKB" id="P02788"/>
    </source>
</evidence>
<evidence type="ECO:0000255" key="3"/>
<evidence type="ECO:0000255" key="4">
    <source>
        <dbReference type="PROSITE-ProRule" id="PRU00741"/>
    </source>
</evidence>
<evidence type="ECO:0000269" key="5">
    <source>
    </source>
</evidence>
<evidence type="ECO:0000269" key="6">
    <source>
    </source>
</evidence>
<evidence type="ECO:0000305" key="7"/>
<evidence type="ECO:0007829" key="8">
    <source>
        <dbReference type="PDB" id="1DTZ"/>
    </source>
</evidence>
<evidence type="ECO:0007829" key="9">
    <source>
        <dbReference type="PDB" id="1I6Q"/>
    </source>
</evidence>
<gene>
    <name type="primary">LTF</name>
</gene>
<keyword id="KW-0002">3D-structure</keyword>
<keyword id="KW-1015">Disulfide bond</keyword>
<keyword id="KW-0325">Glycoprotein</keyword>
<keyword id="KW-0378">Hydrolase</keyword>
<keyword id="KW-0391">Immunity</keyword>
<keyword id="KW-0406">Ion transport</keyword>
<keyword id="KW-0408">Iron</keyword>
<keyword id="KW-0410">Iron transport</keyword>
<keyword id="KW-0479">Metal-binding</keyword>
<keyword id="KW-0892">Osteogenesis</keyword>
<keyword id="KW-0645">Protease</keyword>
<keyword id="KW-0677">Repeat</keyword>
<keyword id="KW-0964">Secreted</keyword>
<keyword id="KW-0720">Serine protease</keyword>
<keyword id="KW-0732">Signal</keyword>
<keyword id="KW-0813">Transport</keyword>
<comment type="function">
    <text evidence="2">Transferrins are iron binding transport proteins which can bind two Fe(3+) ions in association with the binding of an anion, usually bicarbonate.</text>
</comment>
<comment type="function">
    <molecule>Lactotransferrin</molecule>
    <text evidence="2">Major iron-binding and multifunctional protein found in exocrine fluids such as breast milk and mucosal secretions. Has antimicrobial activity, which depends on the extracellular cation concentration. Antimicrobial properties include bacteriostasis, which is related to its ability to sequester free iron and thus inhibit microbial growth, as well as direct bactericidal properties leading to the release of lipopolysaccharides from the bacterial outer membrane. Can also prevent bacterial biofilm development in P.aeruginosa infection. Has weak antifungal activity against C.albicans. Has anabolic, differentiating and anti-apoptotic effects on osteoblasts and can also inhibit osteoclastogenesis, possibly playing a role in the regulation of bone growth. Promotes binding of species C adenoviruses to epithelial cells, promoting adenovirus infection. Can inhibit papillomavirus infections. Stimulates the TLR4 signaling pathway leading to NF-kappa-B activation and subsequent pro-inflammatory cytokine production while also interfering with the lipopolysaccharide (LPS)-stimulated TLR4 signaling. Inhibits neutrophil granulocyte migration to sites of apoptosis, when secreted by apoptotic cells. Stimulates VEGFA-mediated endothelial cell migration and proliferation. Binds heparin, chondroitin sulfate and possibly other glycosaminoglycans (GAGs). Also binds specifically to pneumococcal surface protein A (PspA), the lipid A portion of bacterial lipopolysaccharide (LPS), lysozyme and DNA.</text>
</comment>
<comment type="function">
    <text evidence="2">Lactoferricin binds to the bacterial surface and is crucial for the bactericidal functions. Has some antiviral activity against papillomavirus infection. N-terminal region shows strong antifungal activity against C.albicans. Contains two BBXB heparin-binding consensus sequences that appear to form the predominate functional GAG-binding site.</text>
</comment>
<comment type="function">
    <text evidence="2">The lactotransferrin transferrin-like domain 1 functions as a serine protease of the peptidase S60 family that cuts arginine rich regions. This function contributes to the antimicrobial activity. Shows a preferential cleavage at -Arg-Ser-Arg-Arg-|- and -Arg-Arg-Ser-Arg-|-, and of Z-Phe-Arg-|-aminomethylcoumarin sites.</text>
</comment>
<comment type="subunit">
    <text evidence="2 6">Monomer (By similarity). Found in a complex with LTF, CLU, EPPIN and SEMG1 (By similarity). Interacts with E.coli outer membrane protein C (OmpC) (PubMed:11473113). Found in a complex with MPO and LTF; interacts directly with CP, allows Fe(3+) incorporation into LTF and activation of CP ferroxidase activity (By similarity).</text>
</comment>
<comment type="subcellular location">
    <subcellularLocation>
        <location>Secreted</location>
    </subcellularLocation>
    <subcellularLocation>
        <location evidence="1">Cytoplasmic granule</location>
    </subcellularLocation>
    <text evidence="1">Secreted into most exocrine fluids by various endothelial cells. Stored in the secondary granules of neutrophils (By similarity).</text>
</comment>
<comment type="PTM">
    <text evidence="2">Poly-N-acetyllactosaminic carbohydrate moiety seems to be needed for TLR4 activation.</text>
</comment>
<comment type="similarity">
    <text evidence="4">Belongs to the transferrin family.</text>
</comment>
<name>TRFL_CAMDR</name>
<dbReference type="EC" id="3.4.21.-"/>
<dbReference type="EMBL" id="AJ131674">
    <property type="protein sequence ID" value="CAB53387.1"/>
    <property type="molecule type" value="mRNA"/>
</dbReference>
<dbReference type="EMBL" id="AF165879">
    <property type="protein sequence ID" value="AAF82241.1"/>
    <property type="molecule type" value="mRNA"/>
</dbReference>
<dbReference type="RefSeq" id="NP_001290496.1">
    <property type="nucleotide sequence ID" value="NM_001303567.1"/>
</dbReference>
<dbReference type="PDB" id="1DTZ">
    <property type="method" value="X-ray"/>
    <property type="resolution" value="2.65 A"/>
    <property type="chains" value="A=20-708"/>
</dbReference>
<dbReference type="PDB" id="1I6Q">
    <property type="method" value="X-ray"/>
    <property type="resolution" value="2.70 A"/>
    <property type="chains" value="A=20-708"/>
</dbReference>
<dbReference type="PDB" id="2J4U">
    <property type="method" value="X-ray"/>
    <property type="resolution" value="2.99 A"/>
    <property type="chains" value="S/X=20-64"/>
</dbReference>
<dbReference type="PDBsum" id="1DTZ"/>
<dbReference type="PDBsum" id="1I6Q"/>
<dbReference type="PDBsum" id="2J4U"/>
<dbReference type="SMR" id="Q9TUM0"/>
<dbReference type="STRING" id="9838.ENSCDRP00005008634"/>
<dbReference type="MEROPS" id="S60.001"/>
<dbReference type="MEROPS" id="S60.970"/>
<dbReference type="GlyCosmos" id="Q9TUM0">
    <property type="glycosylation" value="4 sites, No reported glycans"/>
</dbReference>
<dbReference type="iPTMnet" id="Q9TUM0"/>
<dbReference type="GeneID" id="105103507"/>
<dbReference type="KEGG" id="cdk:105103507"/>
<dbReference type="CTD" id="4057"/>
<dbReference type="OrthoDB" id="5914301at2759"/>
<dbReference type="EvolutionaryTrace" id="Q9TUM0"/>
<dbReference type="GO" id="GO:0005769">
    <property type="term" value="C:early endosome"/>
    <property type="evidence" value="ECO:0007669"/>
    <property type="project" value="TreeGrafter"/>
</dbReference>
<dbReference type="GO" id="GO:0005615">
    <property type="term" value="C:extracellular space"/>
    <property type="evidence" value="ECO:0007669"/>
    <property type="project" value="InterPro"/>
</dbReference>
<dbReference type="GO" id="GO:0005886">
    <property type="term" value="C:plasma membrane"/>
    <property type="evidence" value="ECO:0007669"/>
    <property type="project" value="TreeGrafter"/>
</dbReference>
<dbReference type="GO" id="GO:0055037">
    <property type="term" value="C:recycling endosome"/>
    <property type="evidence" value="ECO:0007669"/>
    <property type="project" value="TreeGrafter"/>
</dbReference>
<dbReference type="GO" id="GO:0042581">
    <property type="term" value="C:specific granule"/>
    <property type="evidence" value="ECO:0000250"/>
    <property type="project" value="UniProtKB"/>
</dbReference>
<dbReference type="GO" id="GO:0005506">
    <property type="term" value="F:iron ion binding"/>
    <property type="evidence" value="ECO:0007669"/>
    <property type="project" value="InterPro"/>
</dbReference>
<dbReference type="GO" id="GO:0004252">
    <property type="term" value="F:serine-type endopeptidase activity"/>
    <property type="evidence" value="ECO:0007669"/>
    <property type="project" value="InterPro"/>
</dbReference>
<dbReference type="GO" id="GO:0019731">
    <property type="term" value="P:antibacterial humoral response"/>
    <property type="evidence" value="ECO:0000250"/>
    <property type="project" value="UniProtKB"/>
</dbReference>
<dbReference type="GO" id="GO:0019732">
    <property type="term" value="P:antifungal humoral response"/>
    <property type="evidence" value="ECO:0000250"/>
    <property type="project" value="UniProtKB"/>
</dbReference>
<dbReference type="GO" id="GO:0060349">
    <property type="term" value="P:bone morphogenesis"/>
    <property type="evidence" value="ECO:0000250"/>
    <property type="project" value="UniProtKB"/>
</dbReference>
<dbReference type="GO" id="GO:0002227">
    <property type="term" value="P:innate immune response in mucosa"/>
    <property type="evidence" value="ECO:0000250"/>
    <property type="project" value="UniProtKB"/>
</dbReference>
<dbReference type="GO" id="GO:0006826">
    <property type="term" value="P:iron ion transport"/>
    <property type="evidence" value="ECO:0007669"/>
    <property type="project" value="UniProtKB-KW"/>
</dbReference>
<dbReference type="GO" id="GO:0043066">
    <property type="term" value="P:negative regulation of apoptotic process"/>
    <property type="evidence" value="ECO:0000250"/>
    <property type="project" value="UniProtKB"/>
</dbReference>
<dbReference type="GO" id="GO:0031665">
    <property type="term" value="P:negative regulation of lipopolysaccharide-mediated signaling pathway"/>
    <property type="evidence" value="ECO:0000250"/>
    <property type="project" value="UniProtKB"/>
</dbReference>
<dbReference type="GO" id="GO:2001205">
    <property type="term" value="P:negative regulation of osteoclast development"/>
    <property type="evidence" value="ECO:0000250"/>
    <property type="project" value="UniProtKB"/>
</dbReference>
<dbReference type="GO" id="GO:1900229">
    <property type="term" value="P:negative regulation of single-species biofilm formation in or on host organism"/>
    <property type="evidence" value="ECO:0000250"/>
    <property type="project" value="UniProtKB"/>
</dbReference>
<dbReference type="GO" id="GO:2000308">
    <property type="term" value="P:negative regulation of tumor necrosis factor (ligand) superfamily member 11 production"/>
    <property type="evidence" value="ECO:0000250"/>
    <property type="project" value="UniProtKB"/>
</dbReference>
<dbReference type="GO" id="GO:0001503">
    <property type="term" value="P:ossification"/>
    <property type="evidence" value="ECO:0007669"/>
    <property type="project" value="UniProtKB-KW"/>
</dbReference>
<dbReference type="GO" id="GO:1900159">
    <property type="term" value="P:positive regulation of bone mineralization involved in bone maturation"/>
    <property type="evidence" value="ECO:0000250"/>
    <property type="project" value="UniProtKB"/>
</dbReference>
<dbReference type="GO" id="GO:1902732">
    <property type="term" value="P:positive regulation of chondrocyte proliferation"/>
    <property type="evidence" value="ECO:0000250"/>
    <property type="project" value="UniProtKB"/>
</dbReference>
<dbReference type="GO" id="GO:0045669">
    <property type="term" value="P:positive regulation of osteoblast differentiation"/>
    <property type="evidence" value="ECO:0000250"/>
    <property type="project" value="UniProtKB"/>
</dbReference>
<dbReference type="GO" id="GO:0033690">
    <property type="term" value="P:positive regulation of osteoblast proliferation"/>
    <property type="evidence" value="ECO:0000250"/>
    <property type="project" value="UniProtKB"/>
</dbReference>
<dbReference type="GO" id="GO:0006508">
    <property type="term" value="P:proteolysis"/>
    <property type="evidence" value="ECO:0007669"/>
    <property type="project" value="UniProtKB-KW"/>
</dbReference>
<dbReference type="GO" id="GO:0001817">
    <property type="term" value="P:regulation of cytokine production"/>
    <property type="evidence" value="ECO:0000250"/>
    <property type="project" value="UniProtKB"/>
</dbReference>
<dbReference type="GO" id="GO:0032680">
    <property type="term" value="P:regulation of tumor necrosis factor production"/>
    <property type="evidence" value="ECO:0000250"/>
    <property type="project" value="UniProtKB"/>
</dbReference>
<dbReference type="CDD" id="cd13617">
    <property type="entry name" value="PBP2_transferrin_C"/>
    <property type="match status" value="1"/>
</dbReference>
<dbReference type="CDD" id="cd13618">
    <property type="entry name" value="PBP2_transferrin_N"/>
    <property type="match status" value="1"/>
</dbReference>
<dbReference type="FunFam" id="3.40.190.10:FF:000095">
    <property type="entry name" value="Lactotransferrin"/>
    <property type="match status" value="1"/>
</dbReference>
<dbReference type="FunFam" id="3.40.190.10:FF:000105">
    <property type="entry name" value="Serotransferrin"/>
    <property type="match status" value="1"/>
</dbReference>
<dbReference type="Gene3D" id="3.40.190.10">
    <property type="entry name" value="Periplasmic binding protein-like II"/>
    <property type="match status" value="4"/>
</dbReference>
<dbReference type="InterPro" id="IPR030684">
    <property type="entry name" value="Lactotransferrin"/>
</dbReference>
<dbReference type="InterPro" id="IPR016357">
    <property type="entry name" value="Transferrin"/>
</dbReference>
<dbReference type="InterPro" id="IPR001156">
    <property type="entry name" value="Transferrin-like_dom"/>
</dbReference>
<dbReference type="InterPro" id="IPR018195">
    <property type="entry name" value="Transferrin_Fe_BS"/>
</dbReference>
<dbReference type="PANTHER" id="PTHR11485:SF55">
    <property type="entry name" value="LACTOTRANSFERRIN"/>
    <property type="match status" value="1"/>
</dbReference>
<dbReference type="PANTHER" id="PTHR11485">
    <property type="entry name" value="TRANSFERRIN"/>
    <property type="match status" value="1"/>
</dbReference>
<dbReference type="Pfam" id="PF00405">
    <property type="entry name" value="Transferrin"/>
    <property type="match status" value="2"/>
</dbReference>
<dbReference type="PIRSF" id="PIRSF500683">
    <property type="entry name" value="Lactotransferrin"/>
    <property type="match status" value="1"/>
</dbReference>
<dbReference type="PIRSF" id="PIRSF002549">
    <property type="entry name" value="Transferrin"/>
    <property type="match status" value="1"/>
</dbReference>
<dbReference type="PRINTS" id="PR00422">
    <property type="entry name" value="TRANSFERRIN"/>
</dbReference>
<dbReference type="SMART" id="SM00094">
    <property type="entry name" value="TR_FER"/>
    <property type="match status" value="2"/>
</dbReference>
<dbReference type="SUPFAM" id="SSF53850">
    <property type="entry name" value="Periplasmic binding protein-like II"/>
    <property type="match status" value="2"/>
</dbReference>
<dbReference type="PROSITE" id="PS00205">
    <property type="entry name" value="TRANSFERRIN_LIKE_1"/>
    <property type="match status" value="2"/>
</dbReference>
<dbReference type="PROSITE" id="PS00206">
    <property type="entry name" value="TRANSFERRIN_LIKE_2"/>
    <property type="match status" value="2"/>
</dbReference>
<dbReference type="PROSITE" id="PS00207">
    <property type="entry name" value="TRANSFERRIN_LIKE_3"/>
    <property type="match status" value="2"/>
</dbReference>
<dbReference type="PROSITE" id="PS51408">
    <property type="entry name" value="TRANSFERRIN_LIKE_4"/>
    <property type="match status" value="2"/>
</dbReference>
<reference key="1">
    <citation type="journal article" date="1999" name="Int. Dairy J.">
        <title>Sequence analysis of camel (Camelus dromedarius) lactoferrin.</title>
        <authorList>
            <person name="Kappeler S.R."/>
            <person name="Ackermann M."/>
            <person name="Farah Z."/>
            <person name="Puhan Z."/>
        </authorList>
        <dbReference type="AGRICOLA" id="IND22027049"/>
    </citation>
    <scope>NUCLEOTIDE SEQUENCE [MRNA]</scope>
    <source>
        <strain>Somali</strain>
        <tissue>Lactating mammary gland</tissue>
    </source>
</reference>
<reference key="2">
    <citation type="journal article" date="2001" name="J. Mol. Biol.">
        <title>Camel lactoferrin, a transferrin-cum-lactoferrin: crystal structure of camel apolactoferrin at 2.6 A resolution and structural basis of its dual role.</title>
        <authorList>
            <person name="Khan J.A."/>
            <person name="Kumar P."/>
            <person name="Paramasivam M."/>
            <person name="Yadav R.S."/>
            <person name="Sahani M.S."/>
            <person name="Sharma S."/>
            <person name="Srinivasan A."/>
            <person name="Singh T.P."/>
        </authorList>
    </citation>
    <scope>NUCLEOTIDE SEQUENCE [MRNA]</scope>
    <scope>X-RAY CRYSTALLOGRAPHY (2.65 ANGSTROMS) OF 20-708</scope>
    <scope>GLYCOSYLATION</scope>
    <scope>DISULFIDE BONDS</scope>
    <source>
        <tissue>Mammary gland</tissue>
    </source>
</reference>
<reference key="3">
    <citation type="submission" date="1999-06" db="EMBL/GenBank/DDBJ databases">
        <authorList>
            <person name="Paramasivam M."/>
            <person name="Srinivasan A."/>
            <person name="Singh R."/>
            <person name="Sahani M.S."/>
            <person name="Singh T.P."/>
        </authorList>
    </citation>
    <scope>NUCLEOTIDE SEQUENCE [MRNA]</scope>
    <source>
        <tissue>Mammary gland</tissue>
    </source>
</reference>
<reference key="4">
    <citation type="journal article" date="2001" name="J. Biol. Chem.">
        <title>Protein intermediate trapped by the simultaneous crystallization process. Crystal structure of an iron-saturated intermediate in the Fe3+ binding pathway of camel lactoferrin at 2.7 a resolution.</title>
        <authorList>
            <person name="Khan J.A."/>
            <person name="Kumar P."/>
            <person name="Srinivasan A."/>
            <person name="Singh T.P."/>
        </authorList>
    </citation>
    <scope>X-RAY CRYSTALLOGRAPHY (2.70 ANGSTROMS) OF 20-708 IN COMPLEX WITH IRON AND CARBONATE</scope>
    <scope>DISULFIDE BONDS</scope>
</reference>
<reference key="5">
    <citation type="submission" date="2006-09" db="PDB data bank">
        <title>Crystal structure of the membrane protein Ompc complex with antibacterial lactoferrin.</title>
        <authorList>
            <person name="Baalaji S."/>
            <person name="Acharya R.K."/>
            <person name="Singh T.P."/>
            <person name="Krishnaswamy S."/>
        </authorList>
    </citation>
    <scope>X-RAY CRYSTALLOGRAPHY (2.99 ANGSTROMS) OF 20-64 IN COMPLEX WITH E.COLI OMPC</scope>
    <scope>DISULFIDE BONDS</scope>
    <scope>INTERACTION WITH E.COLI OMPC</scope>
</reference>
<accession>Q9TUM0</accession>
<accession>Q9MZS5</accession>
<proteinExistence type="evidence at protein level"/>
<organism>
    <name type="scientific">Camelus dromedarius</name>
    <name type="common">Dromedary</name>
    <name type="synonym">Arabian camel</name>
    <dbReference type="NCBI Taxonomy" id="9838"/>
    <lineage>
        <taxon>Eukaryota</taxon>
        <taxon>Metazoa</taxon>
        <taxon>Chordata</taxon>
        <taxon>Craniata</taxon>
        <taxon>Vertebrata</taxon>
        <taxon>Euteleostomi</taxon>
        <taxon>Mammalia</taxon>
        <taxon>Eutheria</taxon>
        <taxon>Laurasiatheria</taxon>
        <taxon>Artiodactyla</taxon>
        <taxon>Tylopoda</taxon>
        <taxon>Camelidae</taxon>
        <taxon>Camelus</taxon>
    </lineage>
</organism>
<sequence>MKLFFPALLSLGALGLCLAASKKSVRWCTTSPAESSKCAQWQRRMKKVRGPSVTCVKKTSRFECIQAISTEKADAVTLDGGLVYDAGLDPYKLRPIAAEVYGTENNPQTHYYAVAIAKKGTNFQLNQLQGLKSCHTGLGRSAGWNIPMGLLRPFLDWTGPPEPLQKAVAKFFSASCVPCVDGKEYPNLCQLCAGTGENKCACSSQEPYFGYSGAFKCLQDGAGDVAFVKDSTVFESLPAKADRDQYELLCPNNTRKPVDAFQECHLARVPSHAVVARSVNGKEDLIWKLLVKAQEKFGRGKPSGFQLFGSPAGQKDLLFKDSALGLLRISSKIDSGLYLGSNYITAIRGLRETAAEVELRRAQVVWCAVGSDEQLKCQEWSRQSNQSVVCATASTTEDCIALVLKGEADALSLDGGYIYIAGKCGLVPVLAESQQSPESSGLDCVHRPVKGYLAVAVVRKANDKITWNSLRGKKSCHTAVDRTAGWNIPMGLLSKNTDSCRFDEFLSQSCAPGSDPRSKLCALCAGNEEGQNKCVPNSSERYYGYTGAFRCLAENVGDVAFVKDVTVLDNTDGKNTEQWAKDLKLGDFELLCLNGTRKPVTEAESCHLAVAPNHAVVSRIDKVAHLEQVLLRQQAHFGRNGRDCPGKFCLFQSKTKNLLFNDNTECLAKLQGKTTYEEYLGPQYVTAIAKLRRCSTSPLLEACAFLMR</sequence>